<dbReference type="EMBL" id="AL591688">
    <property type="protein sequence ID" value="CAC41714.1"/>
    <property type="molecule type" value="Genomic_DNA"/>
</dbReference>
<dbReference type="RefSeq" id="NP_384383.1">
    <property type="nucleotide sequence ID" value="NC_003047.1"/>
</dbReference>
<dbReference type="RefSeq" id="WP_010968469.1">
    <property type="nucleotide sequence ID" value="NC_003047.1"/>
</dbReference>
<dbReference type="SMR" id="Q92ST6"/>
<dbReference type="EnsemblBacteria" id="CAC41714">
    <property type="protein sequence ID" value="CAC41714"/>
    <property type="gene ID" value="SMc00357"/>
</dbReference>
<dbReference type="KEGG" id="sme:SMc00357"/>
<dbReference type="PATRIC" id="fig|266834.11.peg.1646"/>
<dbReference type="eggNOG" id="COG0231">
    <property type="taxonomic scope" value="Bacteria"/>
</dbReference>
<dbReference type="HOGENOM" id="CLU_074944_1_1_5"/>
<dbReference type="OrthoDB" id="9801844at2"/>
<dbReference type="UniPathway" id="UPA00345"/>
<dbReference type="Proteomes" id="UP000001976">
    <property type="component" value="Chromosome"/>
</dbReference>
<dbReference type="GO" id="GO:0005737">
    <property type="term" value="C:cytoplasm"/>
    <property type="evidence" value="ECO:0007669"/>
    <property type="project" value="UniProtKB-SubCell"/>
</dbReference>
<dbReference type="GO" id="GO:0003746">
    <property type="term" value="F:translation elongation factor activity"/>
    <property type="evidence" value="ECO:0007669"/>
    <property type="project" value="UniProtKB-UniRule"/>
</dbReference>
<dbReference type="GO" id="GO:0043043">
    <property type="term" value="P:peptide biosynthetic process"/>
    <property type="evidence" value="ECO:0007669"/>
    <property type="project" value="InterPro"/>
</dbReference>
<dbReference type="CDD" id="cd04470">
    <property type="entry name" value="S1_EF-P_repeat_1"/>
    <property type="match status" value="1"/>
</dbReference>
<dbReference type="CDD" id="cd05794">
    <property type="entry name" value="S1_EF-P_repeat_2"/>
    <property type="match status" value="1"/>
</dbReference>
<dbReference type="FunFam" id="2.40.50.140:FF:000004">
    <property type="entry name" value="Elongation factor P"/>
    <property type="match status" value="1"/>
</dbReference>
<dbReference type="FunFam" id="2.40.50.140:FF:000009">
    <property type="entry name" value="Elongation factor P"/>
    <property type="match status" value="1"/>
</dbReference>
<dbReference type="Gene3D" id="2.30.30.30">
    <property type="match status" value="1"/>
</dbReference>
<dbReference type="Gene3D" id="2.40.50.140">
    <property type="entry name" value="Nucleic acid-binding proteins"/>
    <property type="match status" value="2"/>
</dbReference>
<dbReference type="HAMAP" id="MF_00141">
    <property type="entry name" value="EF_P"/>
    <property type="match status" value="1"/>
</dbReference>
<dbReference type="InterPro" id="IPR015365">
    <property type="entry name" value="Elong-fact-P_C"/>
</dbReference>
<dbReference type="InterPro" id="IPR012340">
    <property type="entry name" value="NA-bd_OB-fold"/>
</dbReference>
<dbReference type="InterPro" id="IPR014722">
    <property type="entry name" value="Rib_uL2_dom2"/>
</dbReference>
<dbReference type="InterPro" id="IPR020599">
    <property type="entry name" value="Transl_elong_fac_P/YeiP"/>
</dbReference>
<dbReference type="InterPro" id="IPR013185">
    <property type="entry name" value="Transl_elong_KOW-like"/>
</dbReference>
<dbReference type="InterPro" id="IPR001059">
    <property type="entry name" value="Transl_elong_P/YeiP_cen"/>
</dbReference>
<dbReference type="InterPro" id="IPR013852">
    <property type="entry name" value="Transl_elong_P/YeiP_CS"/>
</dbReference>
<dbReference type="InterPro" id="IPR011768">
    <property type="entry name" value="Transl_elongation_fac_P"/>
</dbReference>
<dbReference type="InterPro" id="IPR008991">
    <property type="entry name" value="Translation_prot_SH3-like_sf"/>
</dbReference>
<dbReference type="NCBIfam" id="TIGR00038">
    <property type="entry name" value="efp"/>
    <property type="match status" value="1"/>
</dbReference>
<dbReference type="NCBIfam" id="NF001810">
    <property type="entry name" value="PRK00529.1"/>
    <property type="match status" value="1"/>
</dbReference>
<dbReference type="PANTHER" id="PTHR30053">
    <property type="entry name" value="ELONGATION FACTOR P"/>
    <property type="match status" value="1"/>
</dbReference>
<dbReference type="PANTHER" id="PTHR30053:SF14">
    <property type="entry name" value="TRANSLATION ELONGATION FACTOR KOW-LIKE DOMAIN-CONTAINING PROTEIN"/>
    <property type="match status" value="1"/>
</dbReference>
<dbReference type="Pfam" id="PF01132">
    <property type="entry name" value="EFP"/>
    <property type="match status" value="1"/>
</dbReference>
<dbReference type="Pfam" id="PF08207">
    <property type="entry name" value="EFP_N"/>
    <property type="match status" value="1"/>
</dbReference>
<dbReference type="Pfam" id="PF09285">
    <property type="entry name" value="Elong-fact-P_C"/>
    <property type="match status" value="1"/>
</dbReference>
<dbReference type="PIRSF" id="PIRSF005901">
    <property type="entry name" value="EF-P"/>
    <property type="match status" value="1"/>
</dbReference>
<dbReference type="SMART" id="SM01185">
    <property type="entry name" value="EFP"/>
    <property type="match status" value="1"/>
</dbReference>
<dbReference type="SMART" id="SM00841">
    <property type="entry name" value="Elong-fact-P_C"/>
    <property type="match status" value="1"/>
</dbReference>
<dbReference type="SUPFAM" id="SSF50249">
    <property type="entry name" value="Nucleic acid-binding proteins"/>
    <property type="match status" value="2"/>
</dbReference>
<dbReference type="SUPFAM" id="SSF50104">
    <property type="entry name" value="Translation proteins SH3-like domain"/>
    <property type="match status" value="1"/>
</dbReference>
<dbReference type="PROSITE" id="PS01275">
    <property type="entry name" value="EFP"/>
    <property type="match status" value="1"/>
</dbReference>
<sequence length="189" mass="20936">MVKVIASSVRKGNVLDVDGKLYVVLTAQNFHPGKGTPVTQVDMRRISDGVKVSERYRTTEQVERAFVEDREHTFLYEDGEGFHFMNPETYDQLVMSSEDIGDLKAYLQEGMAVMLSIHEGIAIAIDLPRHVTLEITETEPVVKGQTASSSYKPAVLSNGVRTLVPPHIQAGTRVVIATEDGSYVERAKD</sequence>
<proteinExistence type="inferred from homology"/>
<organism>
    <name type="scientific">Rhizobium meliloti (strain 1021)</name>
    <name type="common">Ensifer meliloti</name>
    <name type="synonym">Sinorhizobium meliloti</name>
    <dbReference type="NCBI Taxonomy" id="266834"/>
    <lineage>
        <taxon>Bacteria</taxon>
        <taxon>Pseudomonadati</taxon>
        <taxon>Pseudomonadota</taxon>
        <taxon>Alphaproteobacteria</taxon>
        <taxon>Hyphomicrobiales</taxon>
        <taxon>Rhizobiaceae</taxon>
        <taxon>Sinorhizobium/Ensifer group</taxon>
        <taxon>Sinorhizobium</taxon>
    </lineage>
</organism>
<evidence type="ECO:0000255" key="1">
    <source>
        <dbReference type="HAMAP-Rule" id="MF_00141"/>
    </source>
</evidence>
<reference key="1">
    <citation type="journal article" date="2001" name="Proc. Natl. Acad. Sci. U.S.A.">
        <title>Analysis of the chromosome sequence of the legume symbiont Sinorhizobium meliloti strain 1021.</title>
        <authorList>
            <person name="Capela D."/>
            <person name="Barloy-Hubler F."/>
            <person name="Gouzy J."/>
            <person name="Bothe G."/>
            <person name="Ampe F."/>
            <person name="Batut J."/>
            <person name="Boistard P."/>
            <person name="Becker A."/>
            <person name="Boutry M."/>
            <person name="Cadieu E."/>
            <person name="Dreano S."/>
            <person name="Gloux S."/>
            <person name="Godrie T."/>
            <person name="Goffeau A."/>
            <person name="Kahn D."/>
            <person name="Kiss E."/>
            <person name="Lelaure V."/>
            <person name="Masuy D."/>
            <person name="Pohl T."/>
            <person name="Portetelle D."/>
            <person name="Puehler A."/>
            <person name="Purnelle B."/>
            <person name="Ramsperger U."/>
            <person name="Renard C."/>
            <person name="Thebault P."/>
            <person name="Vandenbol M."/>
            <person name="Weidner S."/>
            <person name="Galibert F."/>
        </authorList>
    </citation>
    <scope>NUCLEOTIDE SEQUENCE [LARGE SCALE GENOMIC DNA]</scope>
    <source>
        <strain>1021</strain>
    </source>
</reference>
<reference key="2">
    <citation type="journal article" date="2001" name="Science">
        <title>The composite genome of the legume symbiont Sinorhizobium meliloti.</title>
        <authorList>
            <person name="Galibert F."/>
            <person name="Finan T.M."/>
            <person name="Long S.R."/>
            <person name="Puehler A."/>
            <person name="Abola P."/>
            <person name="Ampe F."/>
            <person name="Barloy-Hubler F."/>
            <person name="Barnett M.J."/>
            <person name="Becker A."/>
            <person name="Boistard P."/>
            <person name="Bothe G."/>
            <person name="Boutry M."/>
            <person name="Bowser L."/>
            <person name="Buhrmester J."/>
            <person name="Cadieu E."/>
            <person name="Capela D."/>
            <person name="Chain P."/>
            <person name="Cowie A."/>
            <person name="Davis R.W."/>
            <person name="Dreano S."/>
            <person name="Federspiel N.A."/>
            <person name="Fisher R.F."/>
            <person name="Gloux S."/>
            <person name="Godrie T."/>
            <person name="Goffeau A."/>
            <person name="Golding B."/>
            <person name="Gouzy J."/>
            <person name="Gurjal M."/>
            <person name="Hernandez-Lucas I."/>
            <person name="Hong A."/>
            <person name="Huizar L."/>
            <person name="Hyman R.W."/>
            <person name="Jones T."/>
            <person name="Kahn D."/>
            <person name="Kahn M.L."/>
            <person name="Kalman S."/>
            <person name="Keating D.H."/>
            <person name="Kiss E."/>
            <person name="Komp C."/>
            <person name="Lelaure V."/>
            <person name="Masuy D."/>
            <person name="Palm C."/>
            <person name="Peck M.C."/>
            <person name="Pohl T.M."/>
            <person name="Portetelle D."/>
            <person name="Purnelle B."/>
            <person name="Ramsperger U."/>
            <person name="Surzycki R."/>
            <person name="Thebault P."/>
            <person name="Vandenbol M."/>
            <person name="Vorhoelter F.J."/>
            <person name="Weidner S."/>
            <person name="Wells D.H."/>
            <person name="Wong K."/>
            <person name="Yeh K.-C."/>
            <person name="Batut J."/>
        </authorList>
    </citation>
    <scope>NUCLEOTIDE SEQUENCE [LARGE SCALE GENOMIC DNA]</scope>
    <source>
        <strain>1021</strain>
    </source>
</reference>
<name>EFP_RHIME</name>
<keyword id="KW-0963">Cytoplasm</keyword>
<keyword id="KW-0251">Elongation factor</keyword>
<keyword id="KW-0648">Protein biosynthesis</keyword>
<keyword id="KW-1185">Reference proteome</keyword>
<gene>
    <name evidence="1" type="primary">efp</name>
    <name type="ordered locus">R00277</name>
    <name type="ORF">SMc00357</name>
</gene>
<comment type="function">
    <text evidence="1">Involved in peptide bond synthesis. Stimulates efficient translation and peptide-bond synthesis on native or reconstituted 70S ribosomes in vitro. Probably functions indirectly by altering the affinity of the ribosome for aminoacyl-tRNA, thus increasing their reactivity as acceptors for peptidyl transferase.</text>
</comment>
<comment type="pathway">
    <text evidence="1">Protein biosynthesis; polypeptide chain elongation.</text>
</comment>
<comment type="subcellular location">
    <subcellularLocation>
        <location evidence="1">Cytoplasm</location>
    </subcellularLocation>
</comment>
<comment type="similarity">
    <text evidence="1">Belongs to the elongation factor P family.</text>
</comment>
<accession>Q92ST6</accession>
<feature type="chain" id="PRO_0000094316" description="Elongation factor P">
    <location>
        <begin position="1"/>
        <end position="189"/>
    </location>
</feature>
<protein>
    <recommendedName>
        <fullName evidence="1">Elongation factor P</fullName>
        <shortName evidence="1">EF-P</shortName>
    </recommendedName>
</protein>